<proteinExistence type="inferred from homology"/>
<accession>A6WIK6</accession>
<gene>
    <name evidence="1" type="primary">rpmE</name>
    <name type="ordered locus">Shew185_0477</name>
</gene>
<feature type="chain" id="PRO_1000126728" description="Large ribosomal subunit protein bL31">
    <location>
        <begin position="1"/>
        <end position="70"/>
    </location>
</feature>
<feature type="binding site" evidence="1">
    <location>
        <position position="16"/>
    </location>
    <ligand>
        <name>Zn(2+)</name>
        <dbReference type="ChEBI" id="CHEBI:29105"/>
    </ligand>
</feature>
<feature type="binding site" evidence="1">
    <location>
        <position position="18"/>
    </location>
    <ligand>
        <name>Zn(2+)</name>
        <dbReference type="ChEBI" id="CHEBI:29105"/>
    </ligand>
</feature>
<feature type="binding site" evidence="1">
    <location>
        <position position="37"/>
    </location>
    <ligand>
        <name>Zn(2+)</name>
        <dbReference type="ChEBI" id="CHEBI:29105"/>
    </ligand>
</feature>
<feature type="binding site" evidence="1">
    <location>
        <position position="40"/>
    </location>
    <ligand>
        <name>Zn(2+)</name>
        <dbReference type="ChEBI" id="CHEBI:29105"/>
    </ligand>
</feature>
<reference key="1">
    <citation type="submission" date="2007-07" db="EMBL/GenBank/DDBJ databases">
        <title>Complete sequence of chromosome of Shewanella baltica OS185.</title>
        <authorList>
            <consortium name="US DOE Joint Genome Institute"/>
            <person name="Copeland A."/>
            <person name="Lucas S."/>
            <person name="Lapidus A."/>
            <person name="Barry K."/>
            <person name="Glavina del Rio T."/>
            <person name="Dalin E."/>
            <person name="Tice H."/>
            <person name="Pitluck S."/>
            <person name="Sims D."/>
            <person name="Brettin T."/>
            <person name="Bruce D."/>
            <person name="Detter J.C."/>
            <person name="Han C."/>
            <person name="Schmutz J."/>
            <person name="Larimer F."/>
            <person name="Land M."/>
            <person name="Hauser L."/>
            <person name="Kyrpides N."/>
            <person name="Mikhailova N."/>
            <person name="Brettar I."/>
            <person name="Rodrigues J."/>
            <person name="Konstantinidis K."/>
            <person name="Tiedje J."/>
            <person name="Richardson P."/>
        </authorList>
    </citation>
    <scope>NUCLEOTIDE SEQUENCE [LARGE SCALE GENOMIC DNA]</scope>
    <source>
        <strain>OS185</strain>
    </source>
</reference>
<dbReference type="EMBL" id="CP000753">
    <property type="protein sequence ID" value="ABS06645.1"/>
    <property type="molecule type" value="Genomic_DNA"/>
</dbReference>
<dbReference type="RefSeq" id="WP_006083277.1">
    <property type="nucleotide sequence ID" value="NC_009665.1"/>
</dbReference>
<dbReference type="SMR" id="A6WIK6"/>
<dbReference type="GeneID" id="11770827"/>
<dbReference type="KEGG" id="sbm:Shew185_0477"/>
<dbReference type="HOGENOM" id="CLU_114306_4_3_6"/>
<dbReference type="GO" id="GO:1990904">
    <property type="term" value="C:ribonucleoprotein complex"/>
    <property type="evidence" value="ECO:0007669"/>
    <property type="project" value="UniProtKB-KW"/>
</dbReference>
<dbReference type="GO" id="GO:0005840">
    <property type="term" value="C:ribosome"/>
    <property type="evidence" value="ECO:0007669"/>
    <property type="project" value="UniProtKB-KW"/>
</dbReference>
<dbReference type="GO" id="GO:0046872">
    <property type="term" value="F:metal ion binding"/>
    <property type="evidence" value="ECO:0007669"/>
    <property type="project" value="UniProtKB-KW"/>
</dbReference>
<dbReference type="GO" id="GO:0019843">
    <property type="term" value="F:rRNA binding"/>
    <property type="evidence" value="ECO:0007669"/>
    <property type="project" value="UniProtKB-KW"/>
</dbReference>
<dbReference type="GO" id="GO:0003735">
    <property type="term" value="F:structural constituent of ribosome"/>
    <property type="evidence" value="ECO:0007669"/>
    <property type="project" value="InterPro"/>
</dbReference>
<dbReference type="GO" id="GO:0006412">
    <property type="term" value="P:translation"/>
    <property type="evidence" value="ECO:0007669"/>
    <property type="project" value="UniProtKB-UniRule"/>
</dbReference>
<dbReference type="Gene3D" id="4.10.830.30">
    <property type="entry name" value="Ribosomal protein L31"/>
    <property type="match status" value="1"/>
</dbReference>
<dbReference type="HAMAP" id="MF_00501">
    <property type="entry name" value="Ribosomal_bL31_1"/>
    <property type="match status" value="1"/>
</dbReference>
<dbReference type="InterPro" id="IPR034704">
    <property type="entry name" value="Ribosomal_bL28/bL31-like_sf"/>
</dbReference>
<dbReference type="InterPro" id="IPR002150">
    <property type="entry name" value="Ribosomal_bL31"/>
</dbReference>
<dbReference type="InterPro" id="IPR027491">
    <property type="entry name" value="Ribosomal_bL31_A"/>
</dbReference>
<dbReference type="InterPro" id="IPR042105">
    <property type="entry name" value="Ribosomal_bL31_sf"/>
</dbReference>
<dbReference type="NCBIfam" id="TIGR00105">
    <property type="entry name" value="L31"/>
    <property type="match status" value="1"/>
</dbReference>
<dbReference type="NCBIfam" id="NF000612">
    <property type="entry name" value="PRK00019.1"/>
    <property type="match status" value="1"/>
</dbReference>
<dbReference type="NCBIfam" id="NF001809">
    <property type="entry name" value="PRK00528.1"/>
    <property type="match status" value="1"/>
</dbReference>
<dbReference type="PANTHER" id="PTHR33280">
    <property type="entry name" value="50S RIBOSOMAL PROTEIN L31, CHLOROPLASTIC"/>
    <property type="match status" value="1"/>
</dbReference>
<dbReference type="PANTHER" id="PTHR33280:SF6">
    <property type="entry name" value="LARGE RIBOSOMAL SUBUNIT PROTEIN BL31A"/>
    <property type="match status" value="1"/>
</dbReference>
<dbReference type="Pfam" id="PF01197">
    <property type="entry name" value="Ribosomal_L31"/>
    <property type="match status" value="1"/>
</dbReference>
<dbReference type="PRINTS" id="PR01249">
    <property type="entry name" value="RIBOSOMALL31"/>
</dbReference>
<dbReference type="SUPFAM" id="SSF143800">
    <property type="entry name" value="L28p-like"/>
    <property type="match status" value="1"/>
</dbReference>
<dbReference type="PROSITE" id="PS01143">
    <property type="entry name" value="RIBOSOMAL_L31"/>
    <property type="match status" value="1"/>
</dbReference>
<sequence length="70" mass="7563">MKPGIHPKYAIITANCTCGNVIKVNSTAGKDLHLDVCGACHPFYTGTQKVVDTGGRIDKFNKRFAVLAKK</sequence>
<comment type="function">
    <text evidence="1">Binds the 23S rRNA.</text>
</comment>
<comment type="cofactor">
    <cofactor evidence="1">
        <name>Zn(2+)</name>
        <dbReference type="ChEBI" id="CHEBI:29105"/>
    </cofactor>
    <text evidence="1">Binds 1 zinc ion per subunit.</text>
</comment>
<comment type="subunit">
    <text evidence="1">Part of the 50S ribosomal subunit.</text>
</comment>
<comment type="similarity">
    <text evidence="1">Belongs to the bacterial ribosomal protein bL31 family. Type A subfamily.</text>
</comment>
<evidence type="ECO:0000255" key="1">
    <source>
        <dbReference type="HAMAP-Rule" id="MF_00501"/>
    </source>
</evidence>
<evidence type="ECO:0000305" key="2"/>
<keyword id="KW-0479">Metal-binding</keyword>
<keyword id="KW-0687">Ribonucleoprotein</keyword>
<keyword id="KW-0689">Ribosomal protein</keyword>
<keyword id="KW-0694">RNA-binding</keyword>
<keyword id="KW-0699">rRNA-binding</keyword>
<keyword id="KW-0862">Zinc</keyword>
<name>RL31_SHEB8</name>
<protein>
    <recommendedName>
        <fullName evidence="1">Large ribosomal subunit protein bL31</fullName>
    </recommendedName>
    <alternativeName>
        <fullName evidence="2">50S ribosomal protein L31</fullName>
    </alternativeName>
</protein>
<organism>
    <name type="scientific">Shewanella baltica (strain OS185)</name>
    <dbReference type="NCBI Taxonomy" id="402882"/>
    <lineage>
        <taxon>Bacteria</taxon>
        <taxon>Pseudomonadati</taxon>
        <taxon>Pseudomonadota</taxon>
        <taxon>Gammaproteobacteria</taxon>
        <taxon>Alteromonadales</taxon>
        <taxon>Shewanellaceae</taxon>
        <taxon>Shewanella</taxon>
    </lineage>
</organism>